<organismHost>
    <name type="scientific">Bos taurus</name>
    <name type="common">Bovine</name>
    <dbReference type="NCBI Taxonomy" id="9913"/>
</organismHost>
<organism>
    <name type="scientific">Rotavirus A (strain RVA/Cow/France/RF/1975/G6P6[1])</name>
    <name type="common">RV-A</name>
    <dbReference type="NCBI Taxonomy" id="10933"/>
    <lineage>
        <taxon>Viruses</taxon>
        <taxon>Riboviria</taxon>
        <taxon>Orthornavirae</taxon>
        <taxon>Duplornaviricota</taxon>
        <taxon>Resentoviricetes</taxon>
        <taxon>Reovirales</taxon>
        <taxon>Sedoreoviridae</taxon>
        <taxon>Rotavirus</taxon>
        <taxon>Rotavirus A</taxon>
    </lineage>
</organism>
<comment type="function">
    <text evidence="1">Plays an important role in stimulating the translation of viral mRNAs. These mRNAs are capped but not polyadenylated, instead terminating in a conserved sequence 'GACC' at the 3' that is recognized by NSP3, which competes with host PABPC1 for EIF4G1 binding. The interaction between NSP3 and host EIF4G1 stabilizes the EIF4E-EIF4G1 interaction, thereby facilitating the initiation of capped mRNA translation.</text>
</comment>
<comment type="subunit">
    <text evidence="1 2 3">Homodimer. Interacts (via the coiled-coil region) with host ZC3H7B (via LD motif). Interacts with host EIF4G1.</text>
</comment>
<comment type="subcellular location">
    <subcellularLocation>
        <location evidence="1">Host cytoplasm</location>
    </subcellularLocation>
</comment>
<comment type="similarity">
    <text evidence="1">Belongs to the rotavirus NSP3 family.</text>
</comment>
<name>NSP3_ROTRF</name>
<sequence>MLKMESTQQMASSIINTSFEAAVVAATSTLELMGIQYDYNEVYTRVKSKFDYVMDDSGVKNNLLGKAATIDQALNGKFGSAARNRNWMADTRTTARLDEDVNKLRMMLSSKGIDQKMRVLNACFNVKRVPGKSSSIIKCTRLMRDKIERGEVEVDDSFVEEKMEVDTIDWKSRYEQLEKRFESLKQRVNEKYTSWVQKAKKVNENMYSLQNVISQQQSQIADLQNYCNKLEVDLQNKISSLVSSVEWYLKSMELPDEIKTDIEQQLNSIDVINPINAIDDFESLIRNIILDYDRIFLMFKGLMRQCNYEYTYE</sequence>
<evidence type="ECO:0000255" key="1">
    <source>
        <dbReference type="HAMAP-Rule" id="MF_04094"/>
    </source>
</evidence>
<evidence type="ECO:0000269" key="2">
    <source>
    </source>
</evidence>
<evidence type="ECO:0000269" key="3">
    <source>
    </source>
</evidence>
<keyword id="KW-0175">Coiled coil</keyword>
<keyword id="KW-1035">Host cytoplasm</keyword>
<keyword id="KW-0945">Host-virus interaction</keyword>
<keyword id="KW-0694">RNA-binding</keyword>
<keyword id="KW-0810">Translation regulation</keyword>
<accession>Q86504</accession>
<dbReference type="EMBL" id="Z21639">
    <property type="protein sequence ID" value="CAA79754.1"/>
    <property type="molecule type" value="mRNA"/>
</dbReference>
<dbReference type="PIR" id="S49006">
    <property type="entry name" value="S49006"/>
</dbReference>
<dbReference type="SMR" id="Q86504"/>
<dbReference type="DIP" id="DIP-1160N"/>
<dbReference type="Proteomes" id="UP000007179">
    <property type="component" value="Genome"/>
</dbReference>
<dbReference type="GO" id="GO:0030430">
    <property type="term" value="C:host cell cytoplasm"/>
    <property type="evidence" value="ECO:0007669"/>
    <property type="project" value="UniProtKB-SubCell"/>
</dbReference>
<dbReference type="GO" id="GO:0003723">
    <property type="term" value="F:RNA binding"/>
    <property type="evidence" value="ECO:0007669"/>
    <property type="project" value="UniProtKB-UniRule"/>
</dbReference>
<dbReference type="GO" id="GO:0006417">
    <property type="term" value="P:regulation of translation"/>
    <property type="evidence" value="ECO:0007669"/>
    <property type="project" value="UniProtKB-UniRule"/>
</dbReference>
<dbReference type="CDD" id="cd20714">
    <property type="entry name" value="NSP3_rotavirus"/>
    <property type="match status" value="1"/>
</dbReference>
<dbReference type="Gene3D" id="3.30.70.1610">
    <property type="match status" value="1"/>
</dbReference>
<dbReference type="Gene3D" id="1.20.5.970">
    <property type="entry name" value="Nonstructural RNA-binding protein"/>
    <property type="match status" value="1"/>
</dbReference>
<dbReference type="Gene3D" id="6.10.280.20">
    <property type="entry name" value="Rotavirus non-structural protein NSP3, N-terminal domain"/>
    <property type="match status" value="1"/>
</dbReference>
<dbReference type="HAMAP" id="MF_04094">
    <property type="entry name" value="ROTA_A_NSP3"/>
    <property type="match status" value="1"/>
</dbReference>
<dbReference type="HAMAP" id="MF_04090">
    <property type="entry name" value="ROTA_NSP3"/>
    <property type="match status" value="1"/>
</dbReference>
<dbReference type="InterPro" id="IPR042519">
    <property type="entry name" value="NSP3_N_rotavirus"/>
</dbReference>
<dbReference type="InterPro" id="IPR036082">
    <property type="entry name" value="NSP3_sf"/>
</dbReference>
<dbReference type="InterPro" id="IPR002873">
    <property type="entry name" value="Rotavirus_NSP3"/>
</dbReference>
<dbReference type="Pfam" id="PF01665">
    <property type="entry name" value="Rota_NSP3"/>
    <property type="match status" value="1"/>
</dbReference>
<dbReference type="SUPFAM" id="SSF69903">
    <property type="entry name" value="NSP3 homodimer"/>
    <property type="match status" value="1"/>
</dbReference>
<dbReference type="SUPFAM" id="SSF58030">
    <property type="entry name" value="Rotavirus nonstructural proteins"/>
    <property type="match status" value="1"/>
</dbReference>
<feature type="chain" id="PRO_0000367816" description="Non-structural protein 3">
    <location>
        <begin position="1"/>
        <end position="313"/>
    </location>
</feature>
<feature type="region of interest" description="RNA-binding" evidence="1">
    <location>
        <begin position="1"/>
        <end position="149"/>
    </location>
</feature>
<feature type="region of interest" description="Dimerization" evidence="1">
    <location>
        <begin position="150"/>
        <end position="206"/>
    </location>
</feature>
<feature type="region of interest" description="Interaction with host ZC3H7B" evidence="1">
    <location>
        <begin position="170"/>
        <end position="234"/>
    </location>
</feature>
<feature type="region of interest" description="Interaction with ZC3H7B">
    <location>
        <begin position="170"/>
        <end position="234"/>
    </location>
</feature>
<feature type="region of interest" description="Interaction with host EIF4G1" evidence="1">
    <location>
        <begin position="208"/>
        <end position="313"/>
    </location>
</feature>
<feature type="coiled-coil region" evidence="1">
    <location>
        <begin position="166"/>
        <end position="237"/>
    </location>
</feature>
<proteinExistence type="evidence at protein level"/>
<protein>
    <recommendedName>
        <fullName evidence="1">Non-structural protein 3</fullName>
        <shortName evidence="1">NSP3</shortName>
    </recommendedName>
    <alternativeName>
        <fullName evidence="1">NCVP4</fullName>
    </alternativeName>
    <alternativeName>
        <fullName evidence="1">Non-structural RNA-binding protein 34</fullName>
        <shortName evidence="1">NS34</shortName>
    </alternativeName>
</protein>
<reference key="1">
    <citation type="journal article" date="1993" name="Arch. Virol.">
        <title>Expression of two bovine rotavirus non-structural proteins (NSP2, NSP3) in the baculovirus system and production of monoclonal antibodies directed against the expressed proteins.</title>
        <authorList>
            <person name="Aponte C."/>
            <person name="Mattion N.M."/>
            <person name="Estes M.K."/>
            <person name="Charpilienne A."/>
            <person name="Cohen J."/>
        </authorList>
    </citation>
    <scope>NUCLEOTIDE SEQUENCE [MRNA]</scope>
</reference>
<reference key="2">
    <citation type="journal article" date="2004" name="J. Virol.">
        <title>RoXaN, a novel cellular protein containing TPR, LD, and zinc finger motifs, forms a ternary complex with eukaryotic initiation factor 4G and rotavirus NSP3.</title>
        <authorList>
            <person name="Vitour D."/>
            <person name="Lindenbaum P."/>
            <person name="Vende P."/>
            <person name="Becker M.M."/>
            <person name="Poncet D."/>
        </authorList>
    </citation>
    <scope>INTERACTION WITH HUMAN ZC3H7B</scope>
</reference>
<reference key="3">
    <citation type="journal article" date="2008" name="J. Virol.">
        <title>Nuclear localization of cytoplasmic poly(A)-binding protein upon rotavirus infection involves the interaction of NSP3 with eIF4G and RoXaN.</title>
        <authorList>
            <person name="Harb M."/>
            <person name="Becker M.M."/>
            <person name="Vitour D."/>
            <person name="Baron C.H."/>
            <person name="Vende P."/>
            <person name="Brown S.C."/>
            <person name="Bolte S."/>
            <person name="Arold S.T."/>
            <person name="Poncet D."/>
        </authorList>
    </citation>
    <scope>INTERACTION WITH HUMAN ZC3H7B</scope>
    <scope>INTERACTION WITH HUMAN EIF4G1</scope>
</reference>